<keyword id="KW-0150">Chloroplast</keyword>
<keyword id="KW-0472">Membrane</keyword>
<keyword id="KW-0602">Photosynthesis</keyword>
<keyword id="KW-0604">Photosystem II</keyword>
<keyword id="KW-0934">Plastid</keyword>
<keyword id="KW-0674">Reaction center</keyword>
<keyword id="KW-0793">Thylakoid</keyword>
<keyword id="KW-0812">Transmembrane</keyword>
<keyword id="KW-1133">Transmembrane helix</keyword>
<name>PSBJ_DRIGR</name>
<accession>Q06GY3</accession>
<gene>
    <name evidence="1" type="primary">psbJ</name>
</gene>
<geneLocation type="chloroplast"/>
<organism>
    <name type="scientific">Drimys granadensis</name>
    <dbReference type="NCBI Taxonomy" id="224735"/>
    <lineage>
        <taxon>Eukaryota</taxon>
        <taxon>Viridiplantae</taxon>
        <taxon>Streptophyta</taxon>
        <taxon>Embryophyta</taxon>
        <taxon>Tracheophyta</taxon>
        <taxon>Spermatophyta</taxon>
        <taxon>Magnoliopsida</taxon>
        <taxon>Magnoliidae</taxon>
        <taxon>Canellales</taxon>
        <taxon>Winteraceae</taxon>
        <taxon>Drimys</taxon>
    </lineage>
</organism>
<protein>
    <recommendedName>
        <fullName evidence="1">Photosystem II reaction center protein J</fullName>
        <shortName evidence="1">PSII-J</shortName>
    </recommendedName>
</protein>
<sequence>MADTTGRIPLWLIGTVTGIPVIGSIGIFFYGSYSGLGSSL</sequence>
<evidence type="ECO:0000255" key="1">
    <source>
        <dbReference type="HAMAP-Rule" id="MF_01305"/>
    </source>
</evidence>
<feature type="chain" id="PRO_0000276093" description="Photosystem II reaction center protein J">
    <location>
        <begin position="1"/>
        <end position="40"/>
    </location>
</feature>
<feature type="transmembrane region" description="Helical" evidence="1">
    <location>
        <begin position="8"/>
        <end position="28"/>
    </location>
</feature>
<reference key="1">
    <citation type="journal article" date="2006" name="BMC Evol. Biol.">
        <title>Complete plastid genome sequences of Drimys, Liriodendron, and Piper: implications for the phylogenetic relationships of magnoliids.</title>
        <authorList>
            <person name="Cai Z."/>
            <person name="Penaflor C."/>
            <person name="Kuehl J.V."/>
            <person name="Leebens-Mack J."/>
            <person name="Carlson J.E."/>
            <person name="dePamphilis C.W."/>
            <person name="Boore J.L."/>
            <person name="Jansen R.K."/>
        </authorList>
    </citation>
    <scope>NUCLEOTIDE SEQUENCE [LARGE SCALE GENOMIC DNA]</scope>
</reference>
<comment type="function">
    <text evidence="1">One of the components of the core complex of photosystem II (PSII). PSII is a light-driven water:plastoquinone oxidoreductase that uses light energy to abstract electrons from H(2)O, generating O(2) and a proton gradient subsequently used for ATP formation. It consists of a core antenna complex that captures photons, and an electron transfer chain that converts photonic excitation into a charge separation.</text>
</comment>
<comment type="subunit">
    <text evidence="1">PSII is composed of 1 copy each of membrane proteins PsbA, PsbB, PsbC, PsbD, PsbE, PsbF, PsbH, PsbI, PsbJ, PsbK, PsbL, PsbM, PsbT, PsbX, PsbY, PsbZ, Psb30/Ycf12, at least 3 peripheral proteins of the oxygen-evolving complex and a large number of cofactors. It forms dimeric complexes.</text>
</comment>
<comment type="subcellular location">
    <subcellularLocation>
        <location evidence="1">Plastid</location>
        <location evidence="1">Chloroplast thylakoid membrane</location>
        <topology evidence="1">Single-pass membrane protein</topology>
    </subcellularLocation>
</comment>
<comment type="similarity">
    <text evidence="1">Belongs to the PsbJ family.</text>
</comment>
<proteinExistence type="inferred from homology"/>
<dbReference type="EMBL" id="DQ887676">
    <property type="protein sequence ID" value="ABH88311.1"/>
    <property type="molecule type" value="Genomic_DNA"/>
</dbReference>
<dbReference type="RefSeq" id="YP_784400.1">
    <property type="nucleotide sequence ID" value="NC_008456.1"/>
</dbReference>
<dbReference type="SMR" id="Q06GY3"/>
<dbReference type="GeneID" id="4363576"/>
<dbReference type="GO" id="GO:0009535">
    <property type="term" value="C:chloroplast thylakoid membrane"/>
    <property type="evidence" value="ECO:0007669"/>
    <property type="project" value="UniProtKB-SubCell"/>
</dbReference>
<dbReference type="GO" id="GO:0009539">
    <property type="term" value="C:photosystem II reaction center"/>
    <property type="evidence" value="ECO:0007669"/>
    <property type="project" value="InterPro"/>
</dbReference>
<dbReference type="GO" id="GO:0015979">
    <property type="term" value="P:photosynthesis"/>
    <property type="evidence" value="ECO:0007669"/>
    <property type="project" value="UniProtKB-UniRule"/>
</dbReference>
<dbReference type="Gene3D" id="6.10.250.2070">
    <property type="match status" value="1"/>
</dbReference>
<dbReference type="HAMAP" id="MF_01305">
    <property type="entry name" value="PSII_PsbJ"/>
    <property type="match status" value="1"/>
</dbReference>
<dbReference type="InterPro" id="IPR002682">
    <property type="entry name" value="PSII_PsbJ"/>
</dbReference>
<dbReference type="InterPro" id="IPR037267">
    <property type="entry name" value="PSII_PsbJ_sf"/>
</dbReference>
<dbReference type="NCBIfam" id="NF002722">
    <property type="entry name" value="PRK02565.1"/>
    <property type="match status" value="1"/>
</dbReference>
<dbReference type="PANTHER" id="PTHR34812">
    <property type="entry name" value="PHOTOSYSTEM II REACTION CENTER PROTEIN J"/>
    <property type="match status" value="1"/>
</dbReference>
<dbReference type="PANTHER" id="PTHR34812:SF3">
    <property type="entry name" value="PHOTOSYSTEM II REACTION CENTER PROTEIN J"/>
    <property type="match status" value="1"/>
</dbReference>
<dbReference type="Pfam" id="PF01788">
    <property type="entry name" value="PsbJ"/>
    <property type="match status" value="1"/>
</dbReference>
<dbReference type="SUPFAM" id="SSF161021">
    <property type="entry name" value="Photosystem II reaction center protein J, PsbJ"/>
    <property type="match status" value="1"/>
</dbReference>